<keyword id="KW-0130">Cell adhesion</keyword>
<keyword id="KW-1003">Cell membrane</keyword>
<keyword id="KW-0966">Cell projection</keyword>
<keyword id="KW-1015">Disulfide bond</keyword>
<keyword id="KW-0325">Glycoprotein</keyword>
<keyword id="KW-0472">Membrane</keyword>
<keyword id="KW-0597">Phosphoprotein</keyword>
<keyword id="KW-0654">Proteoglycan</keyword>
<keyword id="KW-0675">Receptor</keyword>
<keyword id="KW-1185">Reference proteome</keyword>
<keyword id="KW-0964">Secreted</keyword>
<keyword id="KW-0732">Signal</keyword>
<keyword id="KW-0812">Transmembrane</keyword>
<keyword id="KW-1133">Transmembrane helix</keyword>
<dbReference type="EMBL" id="X62881">
    <property type="protein sequence ID" value="CAA44675.1"/>
    <property type="molecule type" value="mRNA"/>
</dbReference>
<dbReference type="EMBL" id="S63418">
    <property type="protein sequence ID" value="AAB20016.1"/>
    <property type="molecule type" value="mRNA"/>
</dbReference>
<dbReference type="PIR" id="A53286">
    <property type="entry name" value="A53286"/>
</dbReference>
<dbReference type="SMR" id="Q29423"/>
<dbReference type="GlyCosmos" id="Q29423">
    <property type="glycosylation" value="7 sites, No reported glycans"/>
</dbReference>
<dbReference type="GlyGen" id="Q29423">
    <property type="glycosylation" value="8 sites"/>
</dbReference>
<dbReference type="PeptideAtlas" id="Q29423"/>
<dbReference type="eggNOG" id="ENOG502RX7Q">
    <property type="taxonomic scope" value="Eukaryota"/>
</dbReference>
<dbReference type="InParanoid" id="Q29423"/>
<dbReference type="Proteomes" id="UP000009136">
    <property type="component" value="Unplaced"/>
</dbReference>
<dbReference type="GO" id="GO:0016324">
    <property type="term" value="C:apical plasma membrane"/>
    <property type="evidence" value="ECO:0000250"/>
    <property type="project" value="UniProtKB"/>
</dbReference>
<dbReference type="GO" id="GO:0016323">
    <property type="term" value="C:basolateral plasma membrane"/>
    <property type="evidence" value="ECO:0000318"/>
    <property type="project" value="GO_Central"/>
</dbReference>
<dbReference type="GO" id="GO:0042995">
    <property type="term" value="C:cell projection"/>
    <property type="evidence" value="ECO:0000250"/>
    <property type="project" value="UniProtKB"/>
</dbReference>
<dbReference type="GO" id="GO:0005576">
    <property type="term" value="C:extracellular region"/>
    <property type="evidence" value="ECO:0007669"/>
    <property type="project" value="UniProtKB-SubCell"/>
</dbReference>
<dbReference type="GO" id="GO:0031258">
    <property type="term" value="C:lamellipodium membrane"/>
    <property type="evidence" value="ECO:0000250"/>
    <property type="project" value="UniProtKB"/>
</dbReference>
<dbReference type="GO" id="GO:0035692">
    <property type="term" value="C:macrophage migration inhibitory factor receptor complex"/>
    <property type="evidence" value="ECO:0000318"/>
    <property type="project" value="GO_Central"/>
</dbReference>
<dbReference type="GO" id="GO:0005902">
    <property type="term" value="C:microvillus"/>
    <property type="evidence" value="ECO:0000250"/>
    <property type="project" value="UniProtKB"/>
</dbReference>
<dbReference type="GO" id="GO:0005886">
    <property type="term" value="C:plasma membrane"/>
    <property type="evidence" value="ECO:0000250"/>
    <property type="project" value="UniProtKB"/>
</dbReference>
<dbReference type="GO" id="GO:0005540">
    <property type="term" value="F:hyaluronic acid binding"/>
    <property type="evidence" value="ECO:0000318"/>
    <property type="project" value="GO_Central"/>
</dbReference>
<dbReference type="GO" id="GO:0004888">
    <property type="term" value="F:transmembrane signaling receptor activity"/>
    <property type="evidence" value="ECO:0000318"/>
    <property type="project" value="GO_Central"/>
</dbReference>
<dbReference type="GO" id="GO:0007155">
    <property type="term" value="P:cell adhesion"/>
    <property type="evidence" value="ECO:0000318"/>
    <property type="project" value="GO_Central"/>
</dbReference>
<dbReference type="GO" id="GO:0019221">
    <property type="term" value="P:cytokine-mediated signaling pathway"/>
    <property type="evidence" value="ECO:0007669"/>
    <property type="project" value="GOC"/>
</dbReference>
<dbReference type="GO" id="GO:0006954">
    <property type="term" value="P:inflammatory response"/>
    <property type="evidence" value="ECO:0000318"/>
    <property type="project" value="GO_Central"/>
</dbReference>
<dbReference type="GO" id="GO:0070374">
    <property type="term" value="P:positive regulation of ERK1 and ERK2 cascade"/>
    <property type="evidence" value="ECO:0000318"/>
    <property type="project" value="GO_Central"/>
</dbReference>
<dbReference type="GO" id="GO:2000392">
    <property type="term" value="P:regulation of lamellipodium morphogenesis"/>
    <property type="evidence" value="ECO:0000250"/>
    <property type="project" value="UniProtKB"/>
</dbReference>
<dbReference type="GO" id="GO:0044319">
    <property type="term" value="P:wound healing, spreading of cells"/>
    <property type="evidence" value="ECO:0000250"/>
    <property type="project" value="UniProtKB"/>
</dbReference>
<dbReference type="CDD" id="cd03516">
    <property type="entry name" value="Link_domain_CD44_like"/>
    <property type="match status" value="1"/>
</dbReference>
<dbReference type="FunFam" id="3.10.100.10:FF:000004">
    <property type="entry name" value="CD44 antigen isoform X2"/>
    <property type="match status" value="1"/>
</dbReference>
<dbReference type="Gene3D" id="3.10.100.10">
    <property type="entry name" value="Mannose-Binding Protein A, subunit A"/>
    <property type="match status" value="1"/>
</dbReference>
<dbReference type="InterPro" id="IPR016186">
    <property type="entry name" value="C-type_lectin-like/link_sf"/>
</dbReference>
<dbReference type="InterPro" id="IPR001231">
    <property type="entry name" value="CD44_antigen"/>
</dbReference>
<dbReference type="InterPro" id="IPR043210">
    <property type="entry name" value="CD44_antigen-like"/>
</dbReference>
<dbReference type="InterPro" id="IPR016187">
    <property type="entry name" value="CTDL_fold"/>
</dbReference>
<dbReference type="InterPro" id="IPR000538">
    <property type="entry name" value="Link_dom"/>
</dbReference>
<dbReference type="PANTHER" id="PTHR10225:SF6">
    <property type="entry name" value="CD44 ANTIGEN"/>
    <property type="match status" value="1"/>
</dbReference>
<dbReference type="PANTHER" id="PTHR10225">
    <property type="entry name" value="HYALURONAN RECEPTOR"/>
    <property type="match status" value="1"/>
</dbReference>
<dbReference type="Pfam" id="PF00193">
    <property type="entry name" value="Xlink"/>
    <property type="match status" value="1"/>
</dbReference>
<dbReference type="PRINTS" id="PR00658">
    <property type="entry name" value="CD44"/>
</dbReference>
<dbReference type="PRINTS" id="PR01265">
    <property type="entry name" value="LINKMODULE"/>
</dbReference>
<dbReference type="SMART" id="SM00445">
    <property type="entry name" value="LINK"/>
    <property type="match status" value="1"/>
</dbReference>
<dbReference type="SUPFAM" id="SSF56436">
    <property type="entry name" value="C-type lectin-like"/>
    <property type="match status" value="1"/>
</dbReference>
<dbReference type="PROSITE" id="PS01241">
    <property type="entry name" value="LINK_1"/>
    <property type="match status" value="1"/>
</dbReference>
<dbReference type="PROSITE" id="PS50963">
    <property type="entry name" value="LINK_2"/>
    <property type="match status" value="1"/>
</dbReference>
<feature type="signal peptide" evidence="4">
    <location>
        <begin position="1"/>
        <end position="20"/>
    </location>
</feature>
<feature type="chain" id="PRO_0000026683" description="CD44 antigen">
    <location>
        <begin position="21"/>
        <end position="366"/>
    </location>
</feature>
<feature type="topological domain" description="Extracellular" evidence="4">
    <location>
        <begin position="21"/>
        <end position="273"/>
    </location>
</feature>
<feature type="transmembrane region" description="Helical" evidence="4">
    <location>
        <begin position="274"/>
        <end position="294"/>
    </location>
</feature>
<feature type="topological domain" description="Cytoplasmic" evidence="4">
    <location>
        <begin position="295"/>
        <end position="366"/>
    </location>
</feature>
<feature type="domain" description="Link" evidence="5">
    <location>
        <begin position="32"/>
        <end position="120"/>
    </location>
</feature>
<feature type="region of interest" description="Disordered" evidence="6">
    <location>
        <begin position="156"/>
        <end position="266"/>
    </location>
</feature>
<feature type="region of interest" description="Stem">
    <location>
        <begin position="229"/>
        <end position="273"/>
    </location>
</feature>
<feature type="region of interest" description="Required for interaction with EZR, MSN and RDX and for co-localization to microvilli" evidence="2">
    <location>
        <begin position="297"/>
        <end position="315"/>
    </location>
</feature>
<feature type="compositionally biased region" description="Basic and acidic residues" evidence="6">
    <location>
        <begin position="156"/>
        <end position="165"/>
    </location>
</feature>
<feature type="compositionally biased region" description="Low complexity" evidence="6">
    <location>
        <begin position="184"/>
        <end position="196"/>
    </location>
</feature>
<feature type="compositionally biased region" description="Basic and acidic residues" evidence="6">
    <location>
        <begin position="222"/>
        <end position="231"/>
    </location>
</feature>
<feature type="compositionally biased region" description="Low complexity" evidence="6">
    <location>
        <begin position="243"/>
        <end position="252"/>
    </location>
</feature>
<feature type="binding site" evidence="1">
    <location>
        <position position="41"/>
    </location>
    <ligand>
        <name>hyaluronan</name>
        <dbReference type="ChEBI" id="CHEBI:132153"/>
    </ligand>
</feature>
<feature type="binding site" evidence="1">
    <location>
        <position position="78"/>
    </location>
    <ligand>
        <name>hyaluronan</name>
        <dbReference type="ChEBI" id="CHEBI:132153"/>
    </ligand>
</feature>
<feature type="binding site" evidence="1">
    <location>
        <position position="79"/>
    </location>
    <ligand>
        <name>hyaluronan</name>
        <dbReference type="ChEBI" id="CHEBI:132153"/>
    </ligand>
</feature>
<feature type="binding site" evidence="1">
    <location>
        <position position="105"/>
    </location>
    <ligand>
        <name>hyaluronan</name>
        <dbReference type="ChEBI" id="CHEBI:132153"/>
    </ligand>
</feature>
<feature type="modified residue" description="Phosphoserine; by PKC" evidence="3">
    <location>
        <position position="296"/>
    </location>
</feature>
<feature type="modified residue" description="Phosphothreonine" evidence="2">
    <location>
        <position position="314"/>
    </location>
</feature>
<feature type="modified residue" description="Phosphoserine" evidence="2">
    <location>
        <position position="321"/>
    </location>
</feature>
<feature type="modified residue" description="Phosphoserine" evidence="3">
    <location>
        <position position="330"/>
    </location>
</feature>
<feature type="glycosylation site" description="N-linked (GlcNAc...) asparagine" evidence="4">
    <location>
        <position position="25"/>
    </location>
</feature>
<feature type="glycosylation site" description="N-linked (GlcNAc...) asparagine" evidence="4">
    <location>
        <position position="57"/>
    </location>
</feature>
<feature type="glycosylation site" description="N-linked (GlcNAc...) asparagine" evidence="4">
    <location>
        <position position="100"/>
    </location>
</feature>
<feature type="glycosylation site" description="N-linked (GlcNAc...) asparagine" evidence="4">
    <location>
        <position position="110"/>
    </location>
</feature>
<feature type="glycosylation site" description="N-linked (GlcNAc...) asparagine" evidence="4">
    <location>
        <position position="120"/>
    </location>
</feature>
<feature type="glycosylation site" description="O-linked (Xyl...) (chondroitin sulfate) serine" evidence="3">
    <location>
        <position position="185"/>
    </location>
</feature>
<feature type="glycosylation site" description="N-linked (GlcNAc...) asparagine" evidence="4">
    <location>
        <position position="222"/>
    </location>
</feature>
<feature type="glycosylation site" description="N-linked (GlcNAc...) asparagine" evidence="4">
    <location>
        <position position="260"/>
    </location>
</feature>
<feature type="disulfide bond" evidence="5">
    <location>
        <begin position="28"/>
        <end position="129"/>
    </location>
</feature>
<feature type="disulfide bond" evidence="5">
    <location>
        <begin position="53"/>
        <end position="118"/>
    </location>
</feature>
<feature type="disulfide bond" evidence="5">
    <location>
        <begin position="77"/>
        <end position="97"/>
    </location>
</feature>
<sequence>MDTFWWRAAWGLCLVQLSLAQIDLNITCRYAGVFHVEKNGRYSISKTEAADLCKAFNSTLPTMAQMEAARNIGFETCRYGFIEGHVVIPRIHPNSICAANNTGVYILTSNTSQYDTICFNASAPPGEDCTSVTDLPNAFEGPITITIVNRDGTRYTKKGEYRTNPEDINPSVVSPSSPPDDEMSSGSPSERSTSGGYSIFHTHLPTVHPSRPRRPWSQRAENTSDTRDYGSSHDPSGRSYTTHASESAGHSSGSEEHGANTTSGPMRKPQIPEWLIILASLLALALILAVCIAVNSRRRCGQKKKLVINNGNGTMEERKPSGLNGEASKSQEMVHLVNKGSSETPDQFMTADETRNLQNVDMKIGV</sequence>
<name>CD44_BOVIN</name>
<comment type="function">
    <text evidence="2 3">Cell-surface receptor that plays a role in cell-cell interactions, cell adhesion and migration, helping them to sense and respond to changes in the tissue microenvironment. Participates thereby in a wide variety of cellular functions including the activation, recirculation and homing of T-lymphocytes, hematopoiesis, inflammation and response to bacterial infection. Engages, through its ectodomain, extracellular matrix components such as hyaluronan/HA, collagen, growth factors, cytokines or proteases and serves as a platform for signal transduction by assembling, via its cytoplasmic domain, protein complexes containing receptor kinases and membrane proteases. Such effectors include PKN2, the RhoGTPases RAC1 and RHOA, Rho-kinases and phospholipase C that coordinate signaling pathways promoting calcium mobilization and actin-mediated cytoskeleton reorganization essential for cell migration and adhesion.</text>
</comment>
<comment type="subunit">
    <text evidence="2 3">Interacts with PKN2 (By similarity). Interacts with TIAM1 and TIAM2 (By similarity). Interacts with HA, as well as other glycosaminoglycans, collagen, laminin, and fibronectin via its N-terminal segment. Interacts with UNC119. Interacts with PDPN (via extracellular domain); this interaction is required for PDPN-mediated directional migration and regulation of lamellipodia extension/stabilization during cell spreading and migration (By similarity). Interacts with RDX, EZR and MSN (By similarity). Interacts with EGFR (By similarity). Interacts with CD74; this complex is essential for the MIF-induced signaling cascade that results in B cell survival (By similarity).</text>
</comment>
<comment type="subcellular location">
    <subcellularLocation>
        <location evidence="2">Cell membrane</location>
        <topology evidence="2">Single-pass type I membrane protein</topology>
    </subcellularLocation>
    <subcellularLocation>
        <location evidence="2">Cell projection</location>
        <location evidence="2">Microvillus</location>
    </subcellularLocation>
    <subcellularLocation>
        <location evidence="3">Secreted</location>
    </subcellularLocation>
    <text evidence="2">Colocalizes with actin in membrane protrusions at wounding edges. Co-localizes with RDX, EZR and MSN in microvilli.</text>
</comment>
<comment type="tissue specificity">
    <text>Mesenteric lymph node and liver, not in heart.</text>
</comment>
<comment type="domain">
    <text evidence="1">The lectin-like LINK domain is responsible for hyaluronan binding.</text>
</comment>
<comment type="PTM">
    <text evidence="3">N-glycosylated.</text>
</comment>
<comment type="PTM">
    <text evidence="3">O-glycosylated; contains chondroitin sulfate glycans which can be more or less sulfated.</text>
</comment>
<comment type="PTM">
    <text evidence="3">Phosphorylated; activation of PKC results in the dephosphorylation of Ser-330 (constitutive phosphorylation site), and the phosphorylation of Ser-296.</text>
</comment>
<proteinExistence type="evidence at transcript level"/>
<organism>
    <name type="scientific">Bos taurus</name>
    <name type="common">Bovine</name>
    <dbReference type="NCBI Taxonomy" id="9913"/>
    <lineage>
        <taxon>Eukaryota</taxon>
        <taxon>Metazoa</taxon>
        <taxon>Chordata</taxon>
        <taxon>Craniata</taxon>
        <taxon>Vertebrata</taxon>
        <taxon>Euteleostomi</taxon>
        <taxon>Mammalia</taxon>
        <taxon>Eutheria</taxon>
        <taxon>Laurasiatheria</taxon>
        <taxon>Artiodactyla</taxon>
        <taxon>Ruminantia</taxon>
        <taxon>Pecora</taxon>
        <taxon>Bovidae</taxon>
        <taxon>Bovinae</taxon>
        <taxon>Bos</taxon>
    </lineage>
</organism>
<gene>
    <name type="primary">CD44</name>
</gene>
<evidence type="ECO:0000250" key="1"/>
<evidence type="ECO:0000250" key="2">
    <source>
        <dbReference type="UniProtKB" id="P15379"/>
    </source>
</evidence>
<evidence type="ECO:0000250" key="3">
    <source>
        <dbReference type="UniProtKB" id="P16070"/>
    </source>
</evidence>
<evidence type="ECO:0000255" key="4"/>
<evidence type="ECO:0000255" key="5">
    <source>
        <dbReference type="PROSITE-ProRule" id="PRU00323"/>
    </source>
</evidence>
<evidence type="ECO:0000256" key="6">
    <source>
        <dbReference type="SAM" id="MobiDB-lite"/>
    </source>
</evidence>
<reference key="1">
    <citation type="journal article" date="1991" name="Mol. Immunol.">
        <title>Sequence of the bovine CD44 cDNA: comparison with human and mouse sequences.</title>
        <authorList>
            <person name="Bosworth B.T."/>
            <person name="St John T."/>
            <person name="Gallatin W.M."/>
            <person name="Harp J.A."/>
        </authorList>
    </citation>
    <scope>NUCLEOTIDE SEQUENCE [MRNA]</scope>
</reference>
<accession>Q29423</accession>
<protein>
    <recommendedName>
        <fullName>CD44 antigen</fullName>
    </recommendedName>
    <alternativeName>
        <fullName>Extracellular matrix receptor III</fullName>
        <shortName>ECMR-III</shortName>
    </alternativeName>
    <alternativeName>
        <fullName>GP90 lymphocyte homing/adhesion receptor</fullName>
    </alternativeName>
    <alternativeName>
        <fullName>HUTCH-I</fullName>
    </alternativeName>
    <alternativeName>
        <fullName>Hermes antigen</fullName>
    </alternativeName>
    <alternativeName>
        <fullName>Hyaluronate receptor</fullName>
    </alternativeName>
    <alternativeName>
        <fullName>Phagocytic glycoprotein 1</fullName>
        <shortName>PGP-1</shortName>
    </alternativeName>
    <alternativeName>
        <fullName>Phagocytic glycoprotein I</fullName>
        <shortName>PGP-I</shortName>
    </alternativeName>
    <cdAntigenName>CD44</cdAntigenName>
</protein>